<comment type="function">
    <text evidence="1">Involved in the gluconeogenesis. Catalyzes stereospecifically the conversion of dihydroxyacetone phosphate (DHAP) to D-glyceraldehyde-3-phosphate (G3P).</text>
</comment>
<comment type="catalytic activity">
    <reaction evidence="1">
        <text>D-glyceraldehyde 3-phosphate = dihydroxyacetone phosphate</text>
        <dbReference type="Rhea" id="RHEA:18585"/>
        <dbReference type="ChEBI" id="CHEBI:57642"/>
        <dbReference type="ChEBI" id="CHEBI:59776"/>
        <dbReference type="EC" id="5.3.1.1"/>
    </reaction>
</comment>
<comment type="pathway">
    <text evidence="1">Carbohydrate biosynthesis; gluconeogenesis.</text>
</comment>
<comment type="pathway">
    <text evidence="1">Carbohydrate degradation; glycolysis; D-glyceraldehyde 3-phosphate from glycerone phosphate: step 1/1.</text>
</comment>
<comment type="subunit">
    <text evidence="1">Homodimer.</text>
</comment>
<comment type="subcellular location">
    <subcellularLocation>
        <location evidence="1">Cytoplasm</location>
    </subcellularLocation>
</comment>
<comment type="similarity">
    <text evidence="1">Belongs to the triosephosphate isomerase family.</text>
</comment>
<evidence type="ECO:0000255" key="1">
    <source>
        <dbReference type="HAMAP-Rule" id="MF_00147"/>
    </source>
</evidence>
<accession>B7IP22</accession>
<name>TPIS_BACC2</name>
<gene>
    <name evidence="1" type="primary">tpiA</name>
    <name type="ordered locus">BCG9842_B5701</name>
</gene>
<dbReference type="EC" id="5.3.1.1" evidence="1"/>
<dbReference type="EMBL" id="CP001186">
    <property type="protein sequence ID" value="ACK98104.1"/>
    <property type="molecule type" value="Genomic_DNA"/>
</dbReference>
<dbReference type="RefSeq" id="WP_001231042.1">
    <property type="nucleotide sequence ID" value="NC_011772.1"/>
</dbReference>
<dbReference type="SMR" id="B7IP22"/>
<dbReference type="GeneID" id="92886322"/>
<dbReference type="KEGG" id="bcg:BCG9842_B5701"/>
<dbReference type="HOGENOM" id="CLU_024251_2_3_9"/>
<dbReference type="UniPathway" id="UPA00109">
    <property type="reaction ID" value="UER00189"/>
</dbReference>
<dbReference type="UniPathway" id="UPA00138"/>
<dbReference type="Proteomes" id="UP000006744">
    <property type="component" value="Chromosome"/>
</dbReference>
<dbReference type="GO" id="GO:0005829">
    <property type="term" value="C:cytosol"/>
    <property type="evidence" value="ECO:0007669"/>
    <property type="project" value="TreeGrafter"/>
</dbReference>
<dbReference type="GO" id="GO:0004807">
    <property type="term" value="F:triose-phosphate isomerase activity"/>
    <property type="evidence" value="ECO:0007669"/>
    <property type="project" value="UniProtKB-UniRule"/>
</dbReference>
<dbReference type="GO" id="GO:0006094">
    <property type="term" value="P:gluconeogenesis"/>
    <property type="evidence" value="ECO:0007669"/>
    <property type="project" value="UniProtKB-UniRule"/>
</dbReference>
<dbReference type="GO" id="GO:0046166">
    <property type="term" value="P:glyceraldehyde-3-phosphate biosynthetic process"/>
    <property type="evidence" value="ECO:0007669"/>
    <property type="project" value="TreeGrafter"/>
</dbReference>
<dbReference type="GO" id="GO:0019563">
    <property type="term" value="P:glycerol catabolic process"/>
    <property type="evidence" value="ECO:0007669"/>
    <property type="project" value="TreeGrafter"/>
</dbReference>
<dbReference type="GO" id="GO:0006096">
    <property type="term" value="P:glycolytic process"/>
    <property type="evidence" value="ECO:0007669"/>
    <property type="project" value="UniProtKB-UniRule"/>
</dbReference>
<dbReference type="CDD" id="cd00311">
    <property type="entry name" value="TIM"/>
    <property type="match status" value="1"/>
</dbReference>
<dbReference type="FunFam" id="3.20.20.70:FF:000016">
    <property type="entry name" value="Triosephosphate isomerase"/>
    <property type="match status" value="1"/>
</dbReference>
<dbReference type="Gene3D" id="3.20.20.70">
    <property type="entry name" value="Aldolase class I"/>
    <property type="match status" value="1"/>
</dbReference>
<dbReference type="HAMAP" id="MF_00147_B">
    <property type="entry name" value="TIM_B"/>
    <property type="match status" value="1"/>
</dbReference>
<dbReference type="InterPro" id="IPR013785">
    <property type="entry name" value="Aldolase_TIM"/>
</dbReference>
<dbReference type="InterPro" id="IPR035990">
    <property type="entry name" value="TIM_sf"/>
</dbReference>
<dbReference type="InterPro" id="IPR022896">
    <property type="entry name" value="TrioseP_Isoase_bac/euk"/>
</dbReference>
<dbReference type="InterPro" id="IPR000652">
    <property type="entry name" value="Triosephosphate_isomerase"/>
</dbReference>
<dbReference type="InterPro" id="IPR020861">
    <property type="entry name" value="Triosephosphate_isomerase_AS"/>
</dbReference>
<dbReference type="NCBIfam" id="TIGR00419">
    <property type="entry name" value="tim"/>
    <property type="match status" value="1"/>
</dbReference>
<dbReference type="PANTHER" id="PTHR21139">
    <property type="entry name" value="TRIOSEPHOSPHATE ISOMERASE"/>
    <property type="match status" value="1"/>
</dbReference>
<dbReference type="PANTHER" id="PTHR21139:SF42">
    <property type="entry name" value="TRIOSEPHOSPHATE ISOMERASE"/>
    <property type="match status" value="1"/>
</dbReference>
<dbReference type="Pfam" id="PF00121">
    <property type="entry name" value="TIM"/>
    <property type="match status" value="1"/>
</dbReference>
<dbReference type="SUPFAM" id="SSF51351">
    <property type="entry name" value="Triosephosphate isomerase (TIM)"/>
    <property type="match status" value="1"/>
</dbReference>
<dbReference type="PROSITE" id="PS00171">
    <property type="entry name" value="TIM_1"/>
    <property type="match status" value="1"/>
</dbReference>
<dbReference type="PROSITE" id="PS51440">
    <property type="entry name" value="TIM_2"/>
    <property type="match status" value="1"/>
</dbReference>
<reference key="1">
    <citation type="submission" date="2008-10" db="EMBL/GenBank/DDBJ databases">
        <title>Genome sequence of Bacillus cereus G9842.</title>
        <authorList>
            <person name="Dodson R.J."/>
            <person name="Durkin A.S."/>
            <person name="Rosovitz M.J."/>
            <person name="Rasko D.A."/>
            <person name="Hoffmaster A."/>
            <person name="Ravel J."/>
            <person name="Sutton G."/>
        </authorList>
    </citation>
    <scope>NUCLEOTIDE SEQUENCE [LARGE SCALE GENOMIC DNA]</scope>
    <source>
        <strain>G9842</strain>
    </source>
</reference>
<keyword id="KW-0963">Cytoplasm</keyword>
<keyword id="KW-0312">Gluconeogenesis</keyword>
<keyword id="KW-0324">Glycolysis</keyword>
<keyword id="KW-0413">Isomerase</keyword>
<keyword id="KW-0597">Phosphoprotein</keyword>
<proteinExistence type="inferred from homology"/>
<organism>
    <name type="scientific">Bacillus cereus (strain G9842)</name>
    <dbReference type="NCBI Taxonomy" id="405531"/>
    <lineage>
        <taxon>Bacteria</taxon>
        <taxon>Bacillati</taxon>
        <taxon>Bacillota</taxon>
        <taxon>Bacilli</taxon>
        <taxon>Bacillales</taxon>
        <taxon>Bacillaceae</taxon>
        <taxon>Bacillus</taxon>
        <taxon>Bacillus cereus group</taxon>
    </lineage>
</organism>
<sequence length="251" mass="26468">MRKPIIAGNWKMNKTLSEAVSFVEEVKGQIPAASAVDAVVCSPALFLERLVAATEGTDLQVGAQNMHFEKNGAFTGEISPVALSDLKVGYVVLGHSERREMFAETDESVNKKTLAAFEHGLTPIVCCGETLEERESGKTFDLVAGQVTKALAGLTEEQVKATVIAYEPIWAIGTGKSSSSADANEVCAHIRKVVAEAVSPEAAEAVRIQYGGSVKPENIKEYMAQSDIDGALVGGASLEPASFLGLLGAVK</sequence>
<feature type="chain" id="PRO_1000117996" description="Triosephosphate isomerase">
    <location>
        <begin position="1"/>
        <end position="251"/>
    </location>
</feature>
<feature type="active site" description="Electrophile" evidence="1">
    <location>
        <position position="95"/>
    </location>
</feature>
<feature type="active site" description="Proton acceptor" evidence="1">
    <location>
        <position position="167"/>
    </location>
</feature>
<feature type="binding site" evidence="1">
    <location>
        <begin position="9"/>
        <end position="11"/>
    </location>
    <ligand>
        <name>substrate</name>
    </ligand>
</feature>
<feature type="binding site" evidence="1">
    <location>
        <position position="173"/>
    </location>
    <ligand>
        <name>substrate</name>
    </ligand>
</feature>
<feature type="binding site" evidence="1">
    <location>
        <position position="213"/>
    </location>
    <ligand>
        <name>substrate</name>
    </ligand>
</feature>
<feature type="binding site" evidence="1">
    <location>
        <begin position="234"/>
        <end position="235"/>
    </location>
    <ligand>
        <name>substrate</name>
    </ligand>
</feature>
<feature type="modified residue" description="Phosphoserine" evidence="1">
    <location>
        <position position="213"/>
    </location>
</feature>
<protein>
    <recommendedName>
        <fullName evidence="1">Triosephosphate isomerase</fullName>
        <shortName evidence="1">TIM</shortName>
        <shortName evidence="1">TPI</shortName>
        <ecNumber evidence="1">5.3.1.1</ecNumber>
    </recommendedName>
    <alternativeName>
        <fullName evidence="1">Triose-phosphate isomerase</fullName>
    </alternativeName>
</protein>